<feature type="chain" id="PRO_0000352425" description="Putative uncharacterized transmembrane protein DDB_G0280899">
    <location>
        <begin position="1"/>
        <end position="67"/>
    </location>
</feature>
<feature type="transmembrane region" description="Helical" evidence="1">
    <location>
        <begin position="6"/>
        <end position="26"/>
    </location>
</feature>
<feature type="transmembrane region" description="Helical" evidence="1">
    <location>
        <begin position="38"/>
        <end position="58"/>
    </location>
</feature>
<name>Y5240_DICDI</name>
<proteinExistence type="predicted"/>
<keyword id="KW-0472">Membrane</keyword>
<keyword id="KW-1185">Reference proteome</keyword>
<keyword id="KW-0812">Transmembrane</keyword>
<keyword id="KW-1133">Transmembrane helix</keyword>
<gene>
    <name type="ORF">DDB_G0280899</name>
</gene>
<sequence>MGAMEGQLWIVFMWVSGVVCGICVLMSENDNIFNNNNNNIIIIIIIIMMIKIMKIIIINNMIIINND</sequence>
<reference key="1">
    <citation type="journal article" date="2005" name="Nature">
        <title>The genome of the social amoeba Dictyostelium discoideum.</title>
        <authorList>
            <person name="Eichinger L."/>
            <person name="Pachebat J.A."/>
            <person name="Gloeckner G."/>
            <person name="Rajandream M.A."/>
            <person name="Sucgang R."/>
            <person name="Berriman M."/>
            <person name="Song J."/>
            <person name="Olsen R."/>
            <person name="Szafranski K."/>
            <person name="Xu Q."/>
            <person name="Tunggal B."/>
            <person name="Kummerfeld S."/>
            <person name="Madera M."/>
            <person name="Konfortov B.A."/>
            <person name="Rivero F."/>
            <person name="Bankier A.T."/>
            <person name="Lehmann R."/>
            <person name="Hamlin N."/>
            <person name="Davies R."/>
            <person name="Gaudet P."/>
            <person name="Fey P."/>
            <person name="Pilcher K."/>
            <person name="Chen G."/>
            <person name="Saunders D."/>
            <person name="Sodergren E.J."/>
            <person name="Davis P."/>
            <person name="Kerhornou A."/>
            <person name="Nie X."/>
            <person name="Hall N."/>
            <person name="Anjard C."/>
            <person name="Hemphill L."/>
            <person name="Bason N."/>
            <person name="Farbrother P."/>
            <person name="Desany B."/>
            <person name="Just E."/>
            <person name="Morio T."/>
            <person name="Rost R."/>
            <person name="Churcher C.M."/>
            <person name="Cooper J."/>
            <person name="Haydock S."/>
            <person name="van Driessche N."/>
            <person name="Cronin A."/>
            <person name="Goodhead I."/>
            <person name="Muzny D.M."/>
            <person name="Mourier T."/>
            <person name="Pain A."/>
            <person name="Lu M."/>
            <person name="Harper D."/>
            <person name="Lindsay R."/>
            <person name="Hauser H."/>
            <person name="James K.D."/>
            <person name="Quiles M."/>
            <person name="Madan Babu M."/>
            <person name="Saito T."/>
            <person name="Buchrieser C."/>
            <person name="Wardroper A."/>
            <person name="Felder M."/>
            <person name="Thangavelu M."/>
            <person name="Johnson D."/>
            <person name="Knights A."/>
            <person name="Loulseged H."/>
            <person name="Mungall K.L."/>
            <person name="Oliver K."/>
            <person name="Price C."/>
            <person name="Quail M.A."/>
            <person name="Urushihara H."/>
            <person name="Hernandez J."/>
            <person name="Rabbinowitsch E."/>
            <person name="Steffen D."/>
            <person name="Sanders M."/>
            <person name="Ma J."/>
            <person name="Kohara Y."/>
            <person name="Sharp S."/>
            <person name="Simmonds M.N."/>
            <person name="Spiegler S."/>
            <person name="Tivey A."/>
            <person name="Sugano S."/>
            <person name="White B."/>
            <person name="Walker D."/>
            <person name="Woodward J.R."/>
            <person name="Winckler T."/>
            <person name="Tanaka Y."/>
            <person name="Shaulsky G."/>
            <person name="Schleicher M."/>
            <person name="Weinstock G.M."/>
            <person name="Rosenthal A."/>
            <person name="Cox E.C."/>
            <person name="Chisholm R.L."/>
            <person name="Gibbs R.A."/>
            <person name="Loomis W.F."/>
            <person name="Platzer M."/>
            <person name="Kay R.R."/>
            <person name="Williams J.G."/>
            <person name="Dear P.H."/>
            <person name="Noegel A.A."/>
            <person name="Barrell B.G."/>
            <person name="Kuspa A."/>
        </authorList>
    </citation>
    <scope>NUCLEOTIDE SEQUENCE [LARGE SCALE GENOMIC DNA]</scope>
    <source>
        <strain>AX4</strain>
    </source>
</reference>
<comment type="subcellular location">
    <subcellularLocation>
        <location evidence="2">Membrane</location>
        <topology evidence="2">Multi-pass membrane protein</topology>
    </subcellularLocation>
</comment>
<protein>
    <recommendedName>
        <fullName>Putative uncharacterized transmembrane protein DDB_G0280899</fullName>
    </recommendedName>
</protein>
<dbReference type="EMBL" id="AAFI02000039">
    <property type="protein sequence ID" value="EAL66991.1"/>
    <property type="molecule type" value="Genomic_DNA"/>
</dbReference>
<dbReference type="RefSeq" id="XP_640970.1">
    <property type="nucleotide sequence ID" value="XM_635878.1"/>
</dbReference>
<dbReference type="PaxDb" id="44689-DDB0215240"/>
<dbReference type="EnsemblProtists" id="EAL66991">
    <property type="protein sequence ID" value="EAL66991"/>
    <property type="gene ID" value="DDB_G0280899"/>
</dbReference>
<dbReference type="GeneID" id="8622774"/>
<dbReference type="KEGG" id="ddi:DDB_G0280899"/>
<dbReference type="HOGENOM" id="CLU_2817800_0_0_1"/>
<dbReference type="InParanoid" id="Q54UQ1"/>
<dbReference type="PRO" id="PR:Q54UQ1"/>
<dbReference type="Proteomes" id="UP000002195">
    <property type="component" value="Chromosome 3"/>
</dbReference>
<dbReference type="GO" id="GO:0016020">
    <property type="term" value="C:membrane"/>
    <property type="evidence" value="ECO:0007669"/>
    <property type="project" value="UniProtKB-SubCell"/>
</dbReference>
<accession>Q54UQ1</accession>
<evidence type="ECO:0000255" key="1"/>
<evidence type="ECO:0000305" key="2"/>
<organism>
    <name type="scientific">Dictyostelium discoideum</name>
    <name type="common">Social amoeba</name>
    <dbReference type="NCBI Taxonomy" id="44689"/>
    <lineage>
        <taxon>Eukaryota</taxon>
        <taxon>Amoebozoa</taxon>
        <taxon>Evosea</taxon>
        <taxon>Eumycetozoa</taxon>
        <taxon>Dictyostelia</taxon>
        <taxon>Dictyosteliales</taxon>
        <taxon>Dictyosteliaceae</taxon>
        <taxon>Dictyostelium</taxon>
    </lineage>
</organism>